<comment type="catalytic activity">
    <reaction evidence="1">
        <text>(S)-4-amino-5-oxopentanoate = 5-aminolevulinate</text>
        <dbReference type="Rhea" id="RHEA:14265"/>
        <dbReference type="ChEBI" id="CHEBI:57501"/>
        <dbReference type="ChEBI" id="CHEBI:356416"/>
        <dbReference type="EC" id="5.4.3.8"/>
    </reaction>
</comment>
<comment type="cofactor">
    <cofactor evidence="1">
        <name>pyridoxal 5'-phosphate</name>
        <dbReference type="ChEBI" id="CHEBI:597326"/>
    </cofactor>
</comment>
<comment type="pathway">
    <text evidence="1">Porphyrin-containing compound metabolism; protoporphyrin-IX biosynthesis; 5-aminolevulinate from L-glutamyl-tRNA(Glu): step 2/2.</text>
</comment>
<comment type="subunit">
    <text evidence="1">Homodimer.</text>
</comment>
<comment type="subcellular location">
    <subcellularLocation>
        <location evidence="1">Cytoplasm</location>
    </subcellularLocation>
</comment>
<comment type="similarity">
    <text evidence="1">Belongs to the class-III pyridoxal-phosphate-dependent aminotransferase family. HemL subfamily.</text>
</comment>
<name>GSA_NEIMA</name>
<protein>
    <recommendedName>
        <fullName evidence="1">Glutamate-1-semialdehyde 2,1-aminomutase</fullName>
        <shortName evidence="1">GSA</shortName>
        <ecNumber evidence="1">5.4.3.8</ecNumber>
    </recommendedName>
    <alternativeName>
        <fullName evidence="1">Glutamate-1-semialdehyde aminotransferase</fullName>
        <shortName evidence="1">GSA-AT</shortName>
    </alternativeName>
</protein>
<proteinExistence type="inferred from homology"/>
<sequence length="427" mass="45269">MNRNEILFDRAKAVIPGGVNSPVRAFGSVGGVPRFIKKAEGAYVWDENGTRYTDYVGSWGPAIVGHAHPEVIEAVREAALGGLSFGAPTEGEIAIAEEIAKIMPSVERLRLVSSGTEATMTAIRLARGFTGRDKIIKFEGCYHGHSDSLLVKAGSGLLTFGNPSSAGVPADFTKHTLVLEYNNIAQLEEAFAQSGNDIACVILEPFVGNMNLVRPSEAFVKALRELTEKHGAVLIYDEVMTGFRVALGGAQSLHGITPDLTTMGKVIGGGMPLAAFGGRKDIMECISPLGGVYQAGTLSGNPIAVAAGLKTLEIIRREGFYENLTARTEQLVQGFRTAADAAGIEFTADSVGGMFGLYFAAHAPRNYADMARSNIEGFKQFFHGMLDRGIAFGPSAYEAGFVSAAHTPELIDETVAVAVEVFKAMAA</sequence>
<evidence type="ECO:0000255" key="1">
    <source>
        <dbReference type="HAMAP-Rule" id="MF_00375"/>
    </source>
</evidence>
<organism>
    <name type="scientific">Neisseria meningitidis serogroup A / serotype 4A (strain DSM 15465 / Z2491)</name>
    <dbReference type="NCBI Taxonomy" id="122587"/>
    <lineage>
        <taxon>Bacteria</taxon>
        <taxon>Pseudomonadati</taxon>
        <taxon>Pseudomonadota</taxon>
        <taxon>Betaproteobacteria</taxon>
        <taxon>Neisseriales</taxon>
        <taxon>Neisseriaceae</taxon>
        <taxon>Neisseria</taxon>
    </lineage>
</organism>
<feature type="chain" id="PRO_0000120427" description="Glutamate-1-semialdehyde 2,1-aminomutase">
    <location>
        <begin position="1"/>
        <end position="427"/>
    </location>
</feature>
<feature type="modified residue" description="N6-(pyridoxal phosphate)lysine" evidence="1">
    <location>
        <position position="265"/>
    </location>
</feature>
<gene>
    <name evidence="1" type="primary">hemL</name>
    <name type="ordered locus">NMA0592</name>
</gene>
<accession>Q9JW10</accession>
<accession>A1IQ35</accession>
<keyword id="KW-0963">Cytoplasm</keyword>
<keyword id="KW-0413">Isomerase</keyword>
<keyword id="KW-0627">Porphyrin biosynthesis</keyword>
<keyword id="KW-0663">Pyridoxal phosphate</keyword>
<reference key="1">
    <citation type="journal article" date="2000" name="Nature">
        <title>Complete DNA sequence of a serogroup A strain of Neisseria meningitidis Z2491.</title>
        <authorList>
            <person name="Parkhill J."/>
            <person name="Achtman M."/>
            <person name="James K.D."/>
            <person name="Bentley S.D."/>
            <person name="Churcher C.M."/>
            <person name="Klee S.R."/>
            <person name="Morelli G."/>
            <person name="Basham D."/>
            <person name="Brown D."/>
            <person name="Chillingworth T."/>
            <person name="Davies R.M."/>
            <person name="Davis P."/>
            <person name="Devlin K."/>
            <person name="Feltwell T."/>
            <person name="Hamlin N."/>
            <person name="Holroyd S."/>
            <person name="Jagels K."/>
            <person name="Leather S."/>
            <person name="Moule S."/>
            <person name="Mungall K.L."/>
            <person name="Quail M.A."/>
            <person name="Rajandream M.A."/>
            <person name="Rutherford K.M."/>
            <person name="Simmonds M."/>
            <person name="Skelton J."/>
            <person name="Whitehead S."/>
            <person name="Spratt B.G."/>
            <person name="Barrell B.G."/>
        </authorList>
    </citation>
    <scope>NUCLEOTIDE SEQUENCE [LARGE SCALE GENOMIC DNA]</scope>
    <source>
        <strain>DSM 15465 / Z2491</strain>
    </source>
</reference>
<dbReference type="EC" id="5.4.3.8" evidence="1"/>
<dbReference type="EMBL" id="AL157959">
    <property type="protein sequence ID" value="CAM07861.1"/>
    <property type="molecule type" value="Genomic_DNA"/>
</dbReference>
<dbReference type="PIR" id="E81978">
    <property type="entry name" value="E81978"/>
</dbReference>
<dbReference type="RefSeq" id="WP_002233042.1">
    <property type="nucleotide sequence ID" value="NC_003116.1"/>
</dbReference>
<dbReference type="SMR" id="Q9JW10"/>
<dbReference type="EnsemblBacteria" id="CAM07861">
    <property type="protein sequence ID" value="CAM07861"/>
    <property type="gene ID" value="NMA0592"/>
</dbReference>
<dbReference type="GeneID" id="93386770"/>
<dbReference type="KEGG" id="nma:NMA0592"/>
<dbReference type="HOGENOM" id="CLU_016922_1_5_4"/>
<dbReference type="UniPathway" id="UPA00251">
    <property type="reaction ID" value="UER00317"/>
</dbReference>
<dbReference type="Proteomes" id="UP000000626">
    <property type="component" value="Chromosome"/>
</dbReference>
<dbReference type="GO" id="GO:0005737">
    <property type="term" value="C:cytoplasm"/>
    <property type="evidence" value="ECO:0007669"/>
    <property type="project" value="UniProtKB-SubCell"/>
</dbReference>
<dbReference type="GO" id="GO:0042286">
    <property type="term" value="F:glutamate-1-semialdehyde 2,1-aminomutase activity"/>
    <property type="evidence" value="ECO:0007669"/>
    <property type="project" value="UniProtKB-UniRule"/>
</dbReference>
<dbReference type="GO" id="GO:0030170">
    <property type="term" value="F:pyridoxal phosphate binding"/>
    <property type="evidence" value="ECO:0007669"/>
    <property type="project" value="InterPro"/>
</dbReference>
<dbReference type="GO" id="GO:0008483">
    <property type="term" value="F:transaminase activity"/>
    <property type="evidence" value="ECO:0007669"/>
    <property type="project" value="InterPro"/>
</dbReference>
<dbReference type="GO" id="GO:0006782">
    <property type="term" value="P:protoporphyrinogen IX biosynthetic process"/>
    <property type="evidence" value="ECO:0007669"/>
    <property type="project" value="UniProtKB-UniRule"/>
</dbReference>
<dbReference type="CDD" id="cd00610">
    <property type="entry name" value="OAT_like"/>
    <property type="match status" value="1"/>
</dbReference>
<dbReference type="FunFam" id="3.40.640.10:FF:000021">
    <property type="entry name" value="Glutamate-1-semialdehyde 2,1-aminomutase"/>
    <property type="match status" value="1"/>
</dbReference>
<dbReference type="Gene3D" id="3.90.1150.10">
    <property type="entry name" value="Aspartate Aminotransferase, domain 1"/>
    <property type="match status" value="1"/>
</dbReference>
<dbReference type="Gene3D" id="3.40.640.10">
    <property type="entry name" value="Type I PLP-dependent aspartate aminotransferase-like (Major domain)"/>
    <property type="match status" value="1"/>
</dbReference>
<dbReference type="HAMAP" id="MF_00375">
    <property type="entry name" value="HemL_aminotrans_3"/>
    <property type="match status" value="1"/>
</dbReference>
<dbReference type="InterPro" id="IPR004639">
    <property type="entry name" value="4pyrrol_synth_GluAld_NH2Trfase"/>
</dbReference>
<dbReference type="InterPro" id="IPR005814">
    <property type="entry name" value="Aminotrans_3"/>
</dbReference>
<dbReference type="InterPro" id="IPR049704">
    <property type="entry name" value="Aminotrans_3_PPA_site"/>
</dbReference>
<dbReference type="InterPro" id="IPR015424">
    <property type="entry name" value="PyrdxlP-dep_Trfase"/>
</dbReference>
<dbReference type="InterPro" id="IPR015421">
    <property type="entry name" value="PyrdxlP-dep_Trfase_major"/>
</dbReference>
<dbReference type="InterPro" id="IPR015422">
    <property type="entry name" value="PyrdxlP-dep_Trfase_small"/>
</dbReference>
<dbReference type="NCBIfam" id="TIGR00713">
    <property type="entry name" value="hemL"/>
    <property type="match status" value="1"/>
</dbReference>
<dbReference type="NCBIfam" id="NF000818">
    <property type="entry name" value="PRK00062.1"/>
    <property type="match status" value="1"/>
</dbReference>
<dbReference type="PANTHER" id="PTHR43713">
    <property type="entry name" value="GLUTAMATE-1-SEMIALDEHYDE 2,1-AMINOMUTASE"/>
    <property type="match status" value="1"/>
</dbReference>
<dbReference type="PANTHER" id="PTHR43713:SF3">
    <property type="entry name" value="GLUTAMATE-1-SEMIALDEHYDE 2,1-AMINOMUTASE 1, CHLOROPLASTIC-RELATED"/>
    <property type="match status" value="1"/>
</dbReference>
<dbReference type="Pfam" id="PF00202">
    <property type="entry name" value="Aminotran_3"/>
    <property type="match status" value="1"/>
</dbReference>
<dbReference type="SUPFAM" id="SSF53383">
    <property type="entry name" value="PLP-dependent transferases"/>
    <property type="match status" value="1"/>
</dbReference>
<dbReference type="PROSITE" id="PS00600">
    <property type="entry name" value="AA_TRANSFER_CLASS_3"/>
    <property type="match status" value="1"/>
</dbReference>